<gene>
    <name type="primary">U75</name>
    <name type="synonym">HDLF2</name>
</gene>
<dbReference type="EMBL" id="U13194">
    <property type="protein sequence ID" value="AAA68466.1"/>
    <property type="molecule type" value="Genomic_DNA"/>
</dbReference>
<dbReference type="EMBL" id="X83413">
    <property type="protein sequence ID" value="CAA58367.1"/>
    <property type="molecule type" value="Genomic_DNA"/>
</dbReference>
<dbReference type="RefSeq" id="NP_042968.1">
    <property type="nucleotide sequence ID" value="NC_001664.2"/>
</dbReference>
<dbReference type="DNASU" id="1487957"/>
<dbReference type="GeneID" id="1487957"/>
<dbReference type="KEGG" id="vg:1487957"/>
<dbReference type="Proteomes" id="UP000009295">
    <property type="component" value="Segment"/>
</dbReference>
<dbReference type="GO" id="GO:0044177">
    <property type="term" value="C:host cell Golgi apparatus"/>
    <property type="evidence" value="ECO:0007669"/>
    <property type="project" value="UniProtKB-SubCell"/>
</dbReference>
<dbReference type="GO" id="GO:0019033">
    <property type="term" value="C:viral tegument"/>
    <property type="evidence" value="ECO:0007669"/>
    <property type="project" value="UniProtKB-SubCell"/>
</dbReference>
<dbReference type="HAMAP" id="MF_04038">
    <property type="entry name" value="HSV_CEP1"/>
    <property type="match status" value="1"/>
</dbReference>
<dbReference type="InterPro" id="IPR002600">
    <property type="entry name" value="Herpes_UL7"/>
</dbReference>
<dbReference type="Pfam" id="PF01677">
    <property type="entry name" value="Herpes_UL7"/>
    <property type="match status" value="1"/>
</dbReference>
<organism>
    <name type="scientific">Human herpesvirus 6A (strain Uganda-1102)</name>
    <name type="common">HHV-6 variant A</name>
    <name type="synonym">Human B lymphotropic virus</name>
    <dbReference type="NCBI Taxonomy" id="10370"/>
    <lineage>
        <taxon>Viruses</taxon>
        <taxon>Duplodnaviria</taxon>
        <taxon>Heunggongvirae</taxon>
        <taxon>Peploviricota</taxon>
        <taxon>Herviviricetes</taxon>
        <taxon>Herpesvirales</taxon>
        <taxon>Orthoherpesviridae</taxon>
        <taxon>Betaherpesvirinae</taxon>
        <taxon>Roseolovirus</taxon>
        <taxon>Roseolovirus humanbeta6a</taxon>
        <taxon>Human betaherpesvirus 6A</taxon>
    </lineage>
</organism>
<evidence type="ECO:0000255" key="1">
    <source>
        <dbReference type="HAMAP-Rule" id="MF_04038"/>
    </source>
</evidence>
<feature type="chain" id="PRO_0000115918" description="Cytoplasmic envelopment protein 1">
    <location>
        <begin position="1"/>
        <end position="249"/>
    </location>
</feature>
<sequence length="249" mass="28761">MKSLKKLKELETSDVFNILHVRTILKVIKIDKCISLARHPLVNITVGDDGIWFHLEDGTMINGLEYKTICEKELGFQGFIGIIILDSEDTLQELRLNPFQFKRRLIHMKVDTPEEFMLCGLVFALENLPLKQSTLHKLIAKLVLFPALSPITKILFNTCDTLVCTLRHIFFNEHASEILHKVPLMIRLYNEMKNTHIEVLELYFNTKRSHNFINLSLESRQLQDSSLQVIQLATQFAQTFYSKNGDTSS</sequence>
<accession>P52456</accession>
<keyword id="KW-1035">Host cytoplasm</keyword>
<keyword id="KW-1040">Host Golgi apparatus</keyword>
<keyword id="KW-1185">Reference proteome</keyword>
<keyword id="KW-0946">Virion</keyword>
<keyword id="KW-0920">Virion tegument</keyword>
<reference key="1">
    <citation type="journal article" date="1994" name="Virology">
        <title>Nucleotide sequence analysis of a 21-kbp region of the genome of human herpesvirus-6 containing homologues of human cytomegalovirus major immediate-early and replication genes.</title>
        <authorList>
            <person name="Nicholas J."/>
        </authorList>
    </citation>
    <scope>NUCLEOTIDE SEQUENCE [GENOMIC DNA]</scope>
</reference>
<reference key="2">
    <citation type="journal article" date="1995" name="Virology">
        <title>The DNA sequence of human herpesvirus-6: structure, coding content, and genome evolution.</title>
        <authorList>
            <person name="Gompels U.A."/>
            <person name="Nicholas J."/>
            <person name="Lawrence G.L."/>
            <person name="Jones M."/>
            <person name="Thomson B.J."/>
            <person name="Martin M.E.D."/>
            <person name="Efstathiou S."/>
            <person name="Craxton M.A."/>
            <person name="Macaulay H.A."/>
        </authorList>
    </citation>
    <scope>NUCLEOTIDE SEQUENCE [LARGE SCALE GENOMIC DNA]</scope>
</reference>
<name>CEP1_HHV6U</name>
<comment type="function">
    <text evidence="1">Plays a critical role in cytoplasmic virus egress. Participates in the final step of tegumentation and envelope acquisition within the host cytoplasm.</text>
</comment>
<comment type="subcellular location">
    <subcellularLocation>
        <location evidence="1">Virion</location>
    </subcellularLocation>
    <subcellularLocation>
        <location evidence="1">Virion tegument</location>
    </subcellularLocation>
    <subcellularLocation>
        <location evidence="1">Host cytoplasm</location>
    </subcellularLocation>
    <subcellularLocation>
        <location evidence="1">Host Golgi apparatus</location>
    </subcellularLocation>
</comment>
<comment type="similarity">
    <text evidence="1">Belongs to the herpesviridae cytoplasmic envelopment protein 1 family.</text>
</comment>
<proteinExistence type="inferred from homology"/>
<protein>
    <recommendedName>
        <fullName evidence="1">Cytoplasmic envelopment protein 1</fullName>
    </recommendedName>
</protein>
<organismHost>
    <name type="scientific">Homo sapiens</name>
    <name type="common">Human</name>
    <dbReference type="NCBI Taxonomy" id="9606"/>
</organismHost>